<accession>Q4KLT0</accession>
<dbReference type="EC" id="2.3.2.31" evidence="1"/>
<dbReference type="EMBL" id="BC099015">
    <property type="protein sequence ID" value="AAH99015.1"/>
    <property type="molecule type" value="mRNA"/>
</dbReference>
<dbReference type="RefSeq" id="NP_001089586.1">
    <property type="nucleotide sequence ID" value="NM_001096117.1"/>
</dbReference>
<dbReference type="DNASU" id="734643"/>
<dbReference type="GeneID" id="734643"/>
<dbReference type="KEGG" id="xla:734643"/>
<dbReference type="AGR" id="Xenbase:XB-GENE-987826"/>
<dbReference type="CTD" id="734643"/>
<dbReference type="Xenbase" id="XB-GENE-987826">
    <property type="gene designation" value="rnf217.L"/>
</dbReference>
<dbReference type="OrthoDB" id="10009520at2759"/>
<dbReference type="UniPathway" id="UPA00143"/>
<dbReference type="Proteomes" id="UP000186698">
    <property type="component" value="Chromosome 5L"/>
</dbReference>
<dbReference type="Bgee" id="734643">
    <property type="expression patterns" value="Expressed in egg cell and 18 other cell types or tissues"/>
</dbReference>
<dbReference type="GO" id="GO:0005737">
    <property type="term" value="C:cytoplasm"/>
    <property type="evidence" value="ECO:0000318"/>
    <property type="project" value="GO_Central"/>
</dbReference>
<dbReference type="GO" id="GO:0016020">
    <property type="term" value="C:membrane"/>
    <property type="evidence" value="ECO:0007669"/>
    <property type="project" value="UniProtKB-SubCell"/>
</dbReference>
<dbReference type="GO" id="GO:0000151">
    <property type="term" value="C:ubiquitin ligase complex"/>
    <property type="evidence" value="ECO:0000318"/>
    <property type="project" value="GO_Central"/>
</dbReference>
<dbReference type="GO" id="GO:0031624">
    <property type="term" value="F:ubiquitin conjugating enzyme binding"/>
    <property type="evidence" value="ECO:0000318"/>
    <property type="project" value="GO_Central"/>
</dbReference>
<dbReference type="GO" id="GO:0061630">
    <property type="term" value="F:ubiquitin protein ligase activity"/>
    <property type="evidence" value="ECO:0000318"/>
    <property type="project" value="GO_Central"/>
</dbReference>
<dbReference type="GO" id="GO:0008270">
    <property type="term" value="F:zinc ion binding"/>
    <property type="evidence" value="ECO:0007669"/>
    <property type="project" value="UniProtKB-KW"/>
</dbReference>
<dbReference type="GO" id="GO:0016567">
    <property type="term" value="P:protein ubiquitination"/>
    <property type="evidence" value="ECO:0007669"/>
    <property type="project" value="UniProtKB-UniPathway"/>
</dbReference>
<dbReference type="GO" id="GO:0006511">
    <property type="term" value="P:ubiquitin-dependent protein catabolic process"/>
    <property type="evidence" value="ECO:0000318"/>
    <property type="project" value="GO_Central"/>
</dbReference>
<dbReference type="CDD" id="cd20342">
    <property type="entry name" value="BRcat_RBR_RNF217"/>
    <property type="match status" value="1"/>
</dbReference>
<dbReference type="CDD" id="cd20350">
    <property type="entry name" value="Rcat_RBR_RNF217"/>
    <property type="match status" value="1"/>
</dbReference>
<dbReference type="CDD" id="cd16622">
    <property type="entry name" value="vRING-HC-C4C4_RBR_RNF217"/>
    <property type="match status" value="1"/>
</dbReference>
<dbReference type="FunFam" id="1.20.120.1750:FF:000008">
    <property type="entry name" value="RBR-type E3 ubiquitin transferase"/>
    <property type="match status" value="1"/>
</dbReference>
<dbReference type="FunFam" id="3.30.40.10:FF:000264">
    <property type="entry name" value="RBR-type E3 ubiquitin transferase"/>
    <property type="match status" value="1"/>
</dbReference>
<dbReference type="Gene3D" id="1.20.120.1750">
    <property type="match status" value="1"/>
</dbReference>
<dbReference type="Gene3D" id="3.30.40.10">
    <property type="entry name" value="Zinc/RING finger domain, C3HC4 (zinc finger)"/>
    <property type="match status" value="1"/>
</dbReference>
<dbReference type="InterPro" id="IPR047551">
    <property type="entry name" value="BRcat_RBR_RNF217"/>
</dbReference>
<dbReference type="InterPro" id="IPR031127">
    <property type="entry name" value="E3_UB_ligase_RBR"/>
</dbReference>
<dbReference type="InterPro" id="IPR002867">
    <property type="entry name" value="IBR_dom"/>
</dbReference>
<dbReference type="InterPro" id="IPR047552">
    <property type="entry name" value="Rcat_RBR_RNF217"/>
</dbReference>
<dbReference type="InterPro" id="IPR047550">
    <property type="entry name" value="RNF217_RBR_vRING-HC"/>
</dbReference>
<dbReference type="InterPro" id="IPR044066">
    <property type="entry name" value="TRIAD_supradom"/>
</dbReference>
<dbReference type="InterPro" id="IPR013083">
    <property type="entry name" value="Znf_RING/FYVE/PHD"/>
</dbReference>
<dbReference type="PANTHER" id="PTHR11685">
    <property type="entry name" value="RBR FAMILY RING FINGER AND IBR DOMAIN-CONTAINING"/>
    <property type="match status" value="1"/>
</dbReference>
<dbReference type="Pfam" id="PF01485">
    <property type="entry name" value="IBR"/>
    <property type="match status" value="1"/>
</dbReference>
<dbReference type="Pfam" id="PF22191">
    <property type="entry name" value="IBR_1"/>
    <property type="match status" value="1"/>
</dbReference>
<dbReference type="SMART" id="SM00647">
    <property type="entry name" value="IBR"/>
    <property type="match status" value="2"/>
</dbReference>
<dbReference type="SUPFAM" id="SSF57850">
    <property type="entry name" value="RING/U-box"/>
    <property type="match status" value="3"/>
</dbReference>
<dbReference type="PROSITE" id="PS51873">
    <property type="entry name" value="TRIAD"/>
    <property type="match status" value="1"/>
</dbReference>
<name>RN217_XENLA</name>
<comment type="function">
    <text evidence="1">E3 ubiquitin-protein ligase which accepts ubiquitin from E2 ubiquitin-conjugating enzymes in the form of a thioester and then directly transfers the ubiquitin to targeted substrates. Mediates the degradation of the iron exporter ferroportin/SLC40A1 and thus regulates iron homeostasis.</text>
</comment>
<comment type="catalytic activity">
    <reaction evidence="1">
        <text>[E2 ubiquitin-conjugating enzyme]-S-ubiquitinyl-L-cysteine + [acceptor protein]-L-lysine = [E2 ubiquitin-conjugating enzyme]-L-cysteine + [acceptor protein]-N(6)-ubiquitinyl-L-lysine.</text>
        <dbReference type="EC" id="2.3.2.31"/>
    </reaction>
</comment>
<comment type="pathway">
    <text>Protein modification; protein ubiquitination.</text>
</comment>
<comment type="subcellular location">
    <subcellularLocation>
        <location evidence="3">Cytoplasm</location>
    </subcellularLocation>
    <subcellularLocation>
        <location evidence="6">Membrane</location>
        <topology evidence="6">Single-pass membrane protein</topology>
    </subcellularLocation>
</comment>
<comment type="domain">
    <text evidence="2">Members of the RBR family are atypical E3 ligases. They interact with the E2 conjugating enzyme UBE2L3 and function like HECT-type E3 enzymes: they bind E2s via the first RING domain, but require an obligate trans-thiolation step during the ubiquitin transfer, requiring a conserved cysteine residue in the second RING domain.</text>
</comment>
<comment type="similarity">
    <text evidence="6">Belongs to the RBR family. RNF217 subfamily.</text>
</comment>
<comment type="caution">
    <text evidence="6">Lacks the His residue in the RING-type domain 1 that is one of the conserved features of the family.</text>
</comment>
<gene>
    <name type="primary">rnf217</name>
</gene>
<organism>
    <name type="scientific">Xenopus laevis</name>
    <name type="common">African clawed frog</name>
    <dbReference type="NCBI Taxonomy" id="8355"/>
    <lineage>
        <taxon>Eukaryota</taxon>
        <taxon>Metazoa</taxon>
        <taxon>Chordata</taxon>
        <taxon>Craniata</taxon>
        <taxon>Vertebrata</taxon>
        <taxon>Euteleostomi</taxon>
        <taxon>Amphibia</taxon>
        <taxon>Batrachia</taxon>
        <taxon>Anura</taxon>
        <taxon>Pipoidea</taxon>
        <taxon>Pipidae</taxon>
        <taxon>Xenopodinae</taxon>
        <taxon>Xenopus</taxon>
        <taxon>Xenopus</taxon>
    </lineage>
</organism>
<reference key="1">
    <citation type="submission" date="2005-07" db="EMBL/GenBank/DDBJ databases">
        <authorList>
            <consortium name="NIH - Xenopus Gene Collection (XGC) project"/>
        </authorList>
    </citation>
    <scope>NUCLEOTIDE SEQUENCE [LARGE SCALE MRNA]</scope>
    <source>
        <tissue>Egg</tissue>
    </source>
</reference>
<keyword id="KW-0963">Cytoplasm</keyword>
<keyword id="KW-0472">Membrane</keyword>
<keyword id="KW-0479">Metal-binding</keyword>
<keyword id="KW-1185">Reference proteome</keyword>
<keyword id="KW-0677">Repeat</keyword>
<keyword id="KW-0808">Transferase</keyword>
<keyword id="KW-0812">Transmembrane</keyword>
<keyword id="KW-1133">Transmembrane helix</keyword>
<keyword id="KW-0833">Ubl conjugation pathway</keyword>
<keyword id="KW-0862">Zinc</keyword>
<keyword id="KW-0863">Zinc-finger</keyword>
<feature type="chain" id="PRO_0000307195" description="E3 ubiquitin-protein ligase RNF217">
    <location>
        <begin position="1"/>
        <end position="282"/>
    </location>
</feature>
<feature type="transmembrane region" description="Helical" evidence="4">
    <location>
        <begin position="243"/>
        <end position="263"/>
    </location>
</feature>
<feature type="zinc finger region" description="RING-type 1" evidence="5">
    <location>
        <begin position="3"/>
        <end position="49"/>
    </location>
</feature>
<feature type="zinc finger region" description="IBR-type" evidence="5">
    <location>
        <begin position="68"/>
        <end position="136"/>
    </location>
</feature>
<feature type="zinc finger region" description="RING-type 2; atypical" evidence="5">
    <location>
        <begin position="163"/>
        <end position="192"/>
    </location>
</feature>
<feature type="region of interest" description="TRIAD supradomain" evidence="5">
    <location>
        <begin position="1"/>
        <end position="218"/>
    </location>
</feature>
<feature type="active site" evidence="5">
    <location>
        <position position="176"/>
    </location>
</feature>
<feature type="binding site" evidence="5">
    <location>
        <position position="3"/>
    </location>
    <ligand>
        <name>Zn(2+)</name>
        <dbReference type="ChEBI" id="CHEBI:29105"/>
        <label>1</label>
    </ligand>
</feature>
<feature type="binding site" evidence="5">
    <location>
        <position position="6"/>
    </location>
    <ligand>
        <name>Zn(2+)</name>
        <dbReference type="ChEBI" id="CHEBI:29105"/>
        <label>1</label>
    </ligand>
</feature>
<feature type="binding site" evidence="5">
    <location>
        <position position="23"/>
    </location>
    <ligand>
        <name>Zn(2+)</name>
        <dbReference type="ChEBI" id="CHEBI:29105"/>
        <label>1</label>
    </ligand>
</feature>
<feature type="binding site" evidence="5">
    <location>
        <position position="26"/>
    </location>
    <ligand>
        <name>Zn(2+)</name>
        <dbReference type="ChEBI" id="CHEBI:29105"/>
        <label>1</label>
    </ligand>
</feature>
<feature type="binding site" evidence="5">
    <location>
        <position position="123"/>
    </location>
    <ligand>
        <name>Zn(2+)</name>
        <dbReference type="ChEBI" id="CHEBI:29105"/>
        <label>2</label>
    </ligand>
</feature>
<feature type="binding site" evidence="5">
    <location>
        <position position="126"/>
    </location>
    <ligand>
        <name>Zn(2+)</name>
        <dbReference type="ChEBI" id="CHEBI:29105"/>
        <label>2</label>
    </ligand>
</feature>
<feature type="binding site" evidence="5">
    <location>
        <position position="131"/>
    </location>
    <ligand>
        <name>Zn(2+)</name>
        <dbReference type="ChEBI" id="CHEBI:29105"/>
        <label>2</label>
    </ligand>
</feature>
<feature type="binding site" evidence="5">
    <location>
        <position position="136"/>
    </location>
    <ligand>
        <name>Zn(2+)</name>
        <dbReference type="ChEBI" id="CHEBI:29105"/>
        <label>2</label>
    </ligand>
</feature>
<feature type="binding site" evidence="5">
    <location>
        <position position="163"/>
    </location>
    <ligand>
        <name>Zn(2+)</name>
        <dbReference type="ChEBI" id="CHEBI:29105"/>
        <label>3</label>
    </ligand>
</feature>
<feature type="binding site" evidence="5">
    <location>
        <position position="166"/>
    </location>
    <ligand>
        <name>Zn(2+)</name>
        <dbReference type="ChEBI" id="CHEBI:29105"/>
        <label>3</label>
    </ligand>
</feature>
<feature type="binding site" evidence="5">
    <location>
        <position position="181"/>
    </location>
    <ligand>
        <name>Zn(2+)</name>
        <dbReference type="ChEBI" id="CHEBI:29105"/>
        <label>3</label>
    </ligand>
</feature>
<feature type="binding site" evidence="5">
    <location>
        <position position="184"/>
    </location>
    <ligand>
        <name>Zn(2+)</name>
        <dbReference type="ChEBI" id="CHEBI:29105"/>
        <label>3</label>
    </ligand>
</feature>
<feature type="binding site" evidence="5">
    <location>
        <position position="189"/>
    </location>
    <ligand>
        <name>Zn(2+)</name>
        <dbReference type="ChEBI" id="CHEBI:29105"/>
        <label>4</label>
    </ligand>
</feature>
<feature type="binding site" evidence="5">
    <location>
        <position position="192"/>
    </location>
    <ligand>
        <name>Zn(2+)</name>
        <dbReference type="ChEBI" id="CHEBI:29105"/>
        <label>4</label>
    </ligand>
</feature>
<feature type="binding site" evidence="5">
    <location>
        <position position="205"/>
    </location>
    <ligand>
        <name>Zn(2+)</name>
        <dbReference type="ChEBI" id="CHEBI:29105"/>
        <label>4</label>
    </ligand>
</feature>
<feature type="binding site" evidence="5">
    <location>
        <position position="214"/>
    </location>
    <ligand>
        <name>Zn(2+)</name>
        <dbReference type="ChEBI" id="CHEBI:29105"/>
        <label>4</label>
    </ligand>
</feature>
<sequence>MSCRVCLEDRSIKPLPCCKKPVCDECLKRYLSSQVQLGQAEIQCPITECNKHLDESTILYSLPHDDIIKYKYFLELSRMDSSTKPCPQCKHFTTFKRKTHIPNPTKSENKLKIQCPSCQFIWCFRCHAPWHEGVNCREYKKGDKLLRHWANEIEHGQRNAQKCPRCKVHIQRTEGCDHMTCSQCNTNFCYRCGERYRQLRFFGDHTSNLSIFGCKYRYLPERPHVRRLVRGSVCAGKLLIAPLLIVLGLVLGALAVVIGLFGLPIYCLCKKQRKRTRTGMPW</sequence>
<protein>
    <recommendedName>
        <fullName>E3 ubiquitin-protein ligase RNF217</fullName>
        <ecNumber evidence="1">2.3.2.31</ecNumber>
    </recommendedName>
    <alternativeName>
        <fullName>RING finger protein 217</fullName>
    </alternativeName>
</protein>
<proteinExistence type="evidence at transcript level"/>
<evidence type="ECO:0000250" key="1">
    <source>
        <dbReference type="UniProtKB" id="D3YYI7"/>
    </source>
</evidence>
<evidence type="ECO:0000250" key="2">
    <source>
        <dbReference type="UniProtKB" id="O60260"/>
    </source>
</evidence>
<evidence type="ECO:0000250" key="3">
    <source>
        <dbReference type="UniProtKB" id="Q8TC41"/>
    </source>
</evidence>
<evidence type="ECO:0000255" key="4"/>
<evidence type="ECO:0000255" key="5">
    <source>
        <dbReference type="PROSITE-ProRule" id="PRU01221"/>
    </source>
</evidence>
<evidence type="ECO:0000305" key="6"/>